<feature type="chain" id="PRO_0000369037" description="ATP synthase subunit b 2">
    <location>
        <begin position="1"/>
        <end position="180"/>
    </location>
</feature>
<feature type="transmembrane region" description="Helical" evidence="2">
    <location>
        <begin position="33"/>
        <end position="53"/>
    </location>
</feature>
<gene>
    <name type="primary">atpF2</name>
    <name type="synonym">atpG</name>
    <name type="ordered locus">Rsph17025_0192</name>
</gene>
<comment type="function">
    <text evidence="1">F(1)F(0) ATP synthase produces ATP from ADP in the presence of a proton or sodium gradient. F-type ATPases consist of two structural domains, F(1) containing the extramembraneous catalytic core and F(0) containing the membrane proton channel, linked together by a central stalk and a peripheral stalk. During catalysis, ATP synthesis in the catalytic domain of F(1) is coupled via a rotary mechanism of the central stalk subunits to proton translocation (By similarity).</text>
</comment>
<comment type="function">
    <text evidence="1">Component of the F(0) channel, it forms part of the peripheral stalk, linking F(1) to F(0). The b'-subunit is a diverged and duplicated form of b found in plants and photosynthetic bacteria (By similarity).</text>
</comment>
<comment type="subunit">
    <text evidence="1">F-type ATPases have 2 components, F(1) - the catalytic core - and F(0) - the membrane proton channel. F(1) has five subunits: alpha(3), beta(3), gamma(1), delta(1), epsilon(1). F(0) has three main subunits: a(1), b(2) and c(10-14). The alpha and beta chains form an alternating ring which encloses part of the gamma chain. F(1) is attached to F(0) by a central stalk formed by the gamma and epsilon chains, while a peripheral stalk is formed by the delta and b chains (By similarity).</text>
</comment>
<comment type="subcellular location">
    <subcellularLocation>
        <location evidence="1">Cell inner membrane</location>
        <topology evidence="1">Single-pass membrane protein</topology>
    </subcellularLocation>
</comment>
<comment type="similarity">
    <text evidence="3">Belongs to the ATPase B chain family.</text>
</comment>
<accession>A4WNY8</accession>
<name>ATPF2_CERS5</name>
<reference key="1">
    <citation type="submission" date="2007-04" db="EMBL/GenBank/DDBJ databases">
        <title>Complete sequence of chromosome of Rhodobacter sphaeroides ATCC 17025.</title>
        <authorList>
            <consortium name="US DOE Joint Genome Institute"/>
            <person name="Copeland A."/>
            <person name="Lucas S."/>
            <person name="Lapidus A."/>
            <person name="Barry K."/>
            <person name="Detter J.C."/>
            <person name="Glavina del Rio T."/>
            <person name="Hammon N."/>
            <person name="Israni S."/>
            <person name="Dalin E."/>
            <person name="Tice H."/>
            <person name="Pitluck S."/>
            <person name="Chertkov O."/>
            <person name="Brettin T."/>
            <person name="Bruce D."/>
            <person name="Han C."/>
            <person name="Schmutz J."/>
            <person name="Larimer F."/>
            <person name="Land M."/>
            <person name="Hauser L."/>
            <person name="Kyrpides N."/>
            <person name="Kim E."/>
            <person name="Richardson P."/>
            <person name="Mackenzie C."/>
            <person name="Choudhary M."/>
            <person name="Donohue T.J."/>
            <person name="Kaplan S."/>
        </authorList>
    </citation>
    <scope>NUCLEOTIDE SEQUENCE [LARGE SCALE GENOMIC DNA]</scope>
    <source>
        <strain>ATCC 17025 / ATH 2.4.3</strain>
    </source>
</reference>
<evidence type="ECO:0000250" key="1"/>
<evidence type="ECO:0000255" key="2"/>
<evidence type="ECO:0000305" key="3"/>
<keyword id="KW-0066">ATP synthesis</keyword>
<keyword id="KW-0997">Cell inner membrane</keyword>
<keyword id="KW-1003">Cell membrane</keyword>
<keyword id="KW-0138">CF(0)</keyword>
<keyword id="KW-0375">Hydrogen ion transport</keyword>
<keyword id="KW-0406">Ion transport</keyword>
<keyword id="KW-0472">Membrane</keyword>
<keyword id="KW-0812">Transmembrane</keyword>
<keyword id="KW-1133">Transmembrane helix</keyword>
<keyword id="KW-0813">Transport</keyword>
<protein>
    <recommendedName>
        <fullName>ATP synthase subunit b 2</fullName>
    </recommendedName>
    <alternativeName>
        <fullName>ATP synthase F(0) sector subunit b 2</fullName>
    </alternativeName>
    <alternativeName>
        <fullName>ATPase subunit I 2</fullName>
    </alternativeName>
    <alternativeName>
        <fullName>F-type ATPase subunit b 2</fullName>
        <shortName>F-ATPase subunit b 2</shortName>
    </alternativeName>
</protein>
<organism>
    <name type="scientific">Cereibacter sphaeroides (strain ATCC 17025 / ATH 2.4.3)</name>
    <name type="common">Rhodobacter sphaeroides</name>
    <dbReference type="NCBI Taxonomy" id="349102"/>
    <lineage>
        <taxon>Bacteria</taxon>
        <taxon>Pseudomonadati</taxon>
        <taxon>Pseudomonadota</taxon>
        <taxon>Alphaproteobacteria</taxon>
        <taxon>Rhodobacterales</taxon>
        <taxon>Paracoccaceae</taxon>
        <taxon>Cereibacter</taxon>
    </lineage>
</organism>
<proteinExistence type="inferred from homology"/>
<sequence length="180" mass="18740">METEVHEAAGAAGHAGQAVGMPQLNFDYWPNQIFWLLVTLVAIYFLLTRVALPRIGAVLAERRGTITNDLAAAEELKQKAVLAEKAYNEALAKARAEAQAIIAETRAAIQAELAVATAKADAEIAAKSAESESRISEIRAGALQSVTEVAKDTAEALVAALGGKSDAASVDAAVAARMKG</sequence>
<dbReference type="EMBL" id="CP000661">
    <property type="protein sequence ID" value="ABP69102.1"/>
    <property type="molecule type" value="Genomic_DNA"/>
</dbReference>
<dbReference type="SMR" id="A4WNY8"/>
<dbReference type="STRING" id="349102.Rsph17025_0192"/>
<dbReference type="KEGG" id="rsq:Rsph17025_0192"/>
<dbReference type="eggNOG" id="COG0711">
    <property type="taxonomic scope" value="Bacteria"/>
</dbReference>
<dbReference type="HOGENOM" id="CLU_079215_1_0_5"/>
<dbReference type="BioCyc" id="RSPH349102:G1G8M-197-MONOMER"/>
<dbReference type="GO" id="GO:0005886">
    <property type="term" value="C:plasma membrane"/>
    <property type="evidence" value="ECO:0007669"/>
    <property type="project" value="UniProtKB-SubCell"/>
</dbReference>
<dbReference type="GO" id="GO:0045259">
    <property type="term" value="C:proton-transporting ATP synthase complex"/>
    <property type="evidence" value="ECO:0007669"/>
    <property type="project" value="UniProtKB-KW"/>
</dbReference>
<dbReference type="GO" id="GO:0046933">
    <property type="term" value="F:proton-transporting ATP synthase activity, rotational mechanism"/>
    <property type="evidence" value="ECO:0007669"/>
    <property type="project" value="UniProtKB-UniRule"/>
</dbReference>
<dbReference type="GO" id="GO:0046961">
    <property type="term" value="F:proton-transporting ATPase activity, rotational mechanism"/>
    <property type="evidence" value="ECO:0007669"/>
    <property type="project" value="TreeGrafter"/>
</dbReference>
<dbReference type="CDD" id="cd06503">
    <property type="entry name" value="ATP-synt_Fo_b"/>
    <property type="match status" value="1"/>
</dbReference>
<dbReference type="Gene3D" id="6.10.250.1580">
    <property type="match status" value="1"/>
</dbReference>
<dbReference type="HAMAP" id="MF_01398">
    <property type="entry name" value="ATP_synth_b_bprime"/>
    <property type="match status" value="1"/>
</dbReference>
<dbReference type="InterPro" id="IPR002146">
    <property type="entry name" value="ATP_synth_b/b'su_bac/chlpt"/>
</dbReference>
<dbReference type="InterPro" id="IPR050059">
    <property type="entry name" value="ATP_synthase_B_chain"/>
</dbReference>
<dbReference type="NCBIfam" id="NF009988">
    <property type="entry name" value="PRK13454.1"/>
    <property type="match status" value="1"/>
</dbReference>
<dbReference type="PANTHER" id="PTHR33445:SF1">
    <property type="entry name" value="ATP SYNTHASE SUBUNIT B"/>
    <property type="match status" value="1"/>
</dbReference>
<dbReference type="PANTHER" id="PTHR33445">
    <property type="entry name" value="ATP SYNTHASE SUBUNIT B', CHLOROPLASTIC"/>
    <property type="match status" value="1"/>
</dbReference>
<dbReference type="Pfam" id="PF00430">
    <property type="entry name" value="ATP-synt_B"/>
    <property type="match status" value="1"/>
</dbReference>